<keyword id="KW-0067">ATP-binding</keyword>
<keyword id="KW-0547">Nucleotide-binding</keyword>
<keyword id="KW-1185">Reference proteome</keyword>
<keyword id="KW-1278">Translocase</keyword>
<keyword id="KW-0813">Transport</keyword>
<proteinExistence type="inferred from homology"/>
<organism>
    <name type="scientific">Bacillus subtilis (strain 168)</name>
    <dbReference type="NCBI Taxonomy" id="224308"/>
    <lineage>
        <taxon>Bacteria</taxon>
        <taxon>Bacillati</taxon>
        <taxon>Bacillota</taxon>
        <taxon>Bacilli</taxon>
        <taxon>Bacillales</taxon>
        <taxon>Bacillaceae</taxon>
        <taxon>Bacillus</taxon>
    </lineage>
</organism>
<comment type="similarity">
    <text evidence="2">Belongs to the ABC transporter superfamily.</text>
</comment>
<evidence type="ECO:0000255" key="1">
    <source>
        <dbReference type="PROSITE-ProRule" id="PRU00434"/>
    </source>
</evidence>
<evidence type="ECO:0000305" key="2"/>
<gene>
    <name type="primary">ythP</name>
    <name type="ordered locus">BSU30010</name>
</gene>
<accession>O34977</accession>
<accession>Q795S0</accession>
<feature type="chain" id="PRO_0000375893" description="Uncharacterized ABC transporter ATP-binding protein YthP">
    <location>
        <begin position="1"/>
        <end position="236"/>
    </location>
</feature>
<feature type="domain" description="ABC transporter" evidence="1">
    <location>
        <begin position="4"/>
        <end position="225"/>
    </location>
</feature>
<feature type="binding site" evidence="1">
    <location>
        <begin position="38"/>
        <end position="45"/>
    </location>
    <ligand>
        <name>ATP</name>
        <dbReference type="ChEBI" id="CHEBI:30616"/>
    </ligand>
</feature>
<name>YTHP_BACSU</name>
<sequence length="236" mass="26507">MTNLLEASIEQAGYTSRKKVLTDVFLEVRKGELVGLIGANGAGKSTAIKAILGLSEDFKGHIAWNDCSFAYIPEHPSFYEELTLWEHLDLISTLHGIEESEFAHRAQSLLQTFSLDHVKHELPVTFSKGMQQKLMLIQAFLSKPDMYVIDEPFIGLDPISTKRFVDMLKAEKERGAGILMCTHVLDTAEKICDRFYMIEKGSLFLQGTLKDVQDKTGLEGQSLLDCFYKAVQGDRL</sequence>
<dbReference type="EC" id="7.-.-.-"/>
<dbReference type="EMBL" id="AF008220">
    <property type="protein sequence ID" value="AAC00277.1"/>
    <property type="molecule type" value="Genomic_DNA"/>
</dbReference>
<dbReference type="EMBL" id="AL009126">
    <property type="protein sequence ID" value="CAB14979.1"/>
    <property type="molecule type" value="Genomic_DNA"/>
</dbReference>
<dbReference type="PIR" id="C69993">
    <property type="entry name" value="C69993"/>
</dbReference>
<dbReference type="RefSeq" id="NP_390879.1">
    <property type="nucleotide sequence ID" value="NC_000964.3"/>
</dbReference>
<dbReference type="RefSeq" id="WP_003229230.1">
    <property type="nucleotide sequence ID" value="NZ_OZ025638.1"/>
</dbReference>
<dbReference type="SMR" id="O34977"/>
<dbReference type="FunCoup" id="O34977">
    <property type="interactions" value="50"/>
</dbReference>
<dbReference type="STRING" id="224308.BSU30010"/>
<dbReference type="PaxDb" id="224308-BSU30010"/>
<dbReference type="DNASU" id="937282"/>
<dbReference type="EnsemblBacteria" id="CAB14979">
    <property type="protein sequence ID" value="CAB14979"/>
    <property type="gene ID" value="BSU_30010"/>
</dbReference>
<dbReference type="GeneID" id="937282"/>
<dbReference type="KEGG" id="bsu:BSU30010"/>
<dbReference type="PATRIC" id="fig|224308.179.peg.3259"/>
<dbReference type="eggNOG" id="COG1131">
    <property type="taxonomic scope" value="Bacteria"/>
</dbReference>
<dbReference type="InParanoid" id="O34977"/>
<dbReference type="OrthoDB" id="9804819at2"/>
<dbReference type="PhylomeDB" id="O34977"/>
<dbReference type="BioCyc" id="BSUB:BSU30010-MONOMER"/>
<dbReference type="Proteomes" id="UP000001570">
    <property type="component" value="Chromosome"/>
</dbReference>
<dbReference type="GO" id="GO:0005524">
    <property type="term" value="F:ATP binding"/>
    <property type="evidence" value="ECO:0007669"/>
    <property type="project" value="UniProtKB-KW"/>
</dbReference>
<dbReference type="GO" id="GO:0016887">
    <property type="term" value="F:ATP hydrolysis activity"/>
    <property type="evidence" value="ECO:0007669"/>
    <property type="project" value="InterPro"/>
</dbReference>
<dbReference type="CDD" id="cd03230">
    <property type="entry name" value="ABC_DR_subfamily_A"/>
    <property type="match status" value="1"/>
</dbReference>
<dbReference type="Gene3D" id="3.40.50.300">
    <property type="entry name" value="P-loop containing nucleotide triphosphate hydrolases"/>
    <property type="match status" value="1"/>
</dbReference>
<dbReference type="InterPro" id="IPR003593">
    <property type="entry name" value="AAA+_ATPase"/>
</dbReference>
<dbReference type="InterPro" id="IPR003439">
    <property type="entry name" value="ABC_transporter-like_ATP-bd"/>
</dbReference>
<dbReference type="InterPro" id="IPR017871">
    <property type="entry name" value="ABC_transporter-like_CS"/>
</dbReference>
<dbReference type="InterPro" id="IPR051782">
    <property type="entry name" value="ABC_Transporter_VariousFunc"/>
</dbReference>
<dbReference type="InterPro" id="IPR027417">
    <property type="entry name" value="P-loop_NTPase"/>
</dbReference>
<dbReference type="PANTHER" id="PTHR42939">
    <property type="entry name" value="ABC TRANSPORTER ATP-BINDING PROTEIN ALBC-RELATED"/>
    <property type="match status" value="1"/>
</dbReference>
<dbReference type="PANTHER" id="PTHR42939:SF2">
    <property type="entry name" value="ABC-TYPE TRANSPORTER ATP-BINDING PROTEIN ECSA"/>
    <property type="match status" value="1"/>
</dbReference>
<dbReference type="Pfam" id="PF00005">
    <property type="entry name" value="ABC_tran"/>
    <property type="match status" value="1"/>
</dbReference>
<dbReference type="SMART" id="SM00382">
    <property type="entry name" value="AAA"/>
    <property type="match status" value="1"/>
</dbReference>
<dbReference type="SUPFAM" id="SSF52540">
    <property type="entry name" value="P-loop containing nucleoside triphosphate hydrolases"/>
    <property type="match status" value="1"/>
</dbReference>
<dbReference type="PROSITE" id="PS00211">
    <property type="entry name" value="ABC_TRANSPORTER_1"/>
    <property type="match status" value="1"/>
</dbReference>
<dbReference type="PROSITE" id="PS50893">
    <property type="entry name" value="ABC_TRANSPORTER_2"/>
    <property type="match status" value="1"/>
</dbReference>
<protein>
    <recommendedName>
        <fullName>Uncharacterized ABC transporter ATP-binding protein YthP</fullName>
        <ecNumber>7.-.-.-</ecNumber>
    </recommendedName>
</protein>
<reference key="1">
    <citation type="journal article" date="1997" name="Microbiology">
        <title>Sequencing and functional annotation of the Bacillus subtilis genes in the 200 kb rrnB-dnaB region.</title>
        <authorList>
            <person name="Lapidus A."/>
            <person name="Galleron N."/>
            <person name="Sorokin A."/>
            <person name="Ehrlich S.D."/>
        </authorList>
    </citation>
    <scope>NUCLEOTIDE SEQUENCE [GENOMIC DNA]</scope>
    <source>
        <strain>168</strain>
    </source>
</reference>
<reference key="2">
    <citation type="journal article" date="1997" name="Nature">
        <title>The complete genome sequence of the Gram-positive bacterium Bacillus subtilis.</title>
        <authorList>
            <person name="Kunst F."/>
            <person name="Ogasawara N."/>
            <person name="Moszer I."/>
            <person name="Albertini A.M."/>
            <person name="Alloni G."/>
            <person name="Azevedo V."/>
            <person name="Bertero M.G."/>
            <person name="Bessieres P."/>
            <person name="Bolotin A."/>
            <person name="Borchert S."/>
            <person name="Borriss R."/>
            <person name="Boursier L."/>
            <person name="Brans A."/>
            <person name="Braun M."/>
            <person name="Brignell S.C."/>
            <person name="Bron S."/>
            <person name="Brouillet S."/>
            <person name="Bruschi C.V."/>
            <person name="Caldwell B."/>
            <person name="Capuano V."/>
            <person name="Carter N.M."/>
            <person name="Choi S.-K."/>
            <person name="Codani J.-J."/>
            <person name="Connerton I.F."/>
            <person name="Cummings N.J."/>
            <person name="Daniel R.A."/>
            <person name="Denizot F."/>
            <person name="Devine K.M."/>
            <person name="Duesterhoeft A."/>
            <person name="Ehrlich S.D."/>
            <person name="Emmerson P.T."/>
            <person name="Entian K.-D."/>
            <person name="Errington J."/>
            <person name="Fabret C."/>
            <person name="Ferrari E."/>
            <person name="Foulger D."/>
            <person name="Fritz C."/>
            <person name="Fujita M."/>
            <person name="Fujita Y."/>
            <person name="Fuma S."/>
            <person name="Galizzi A."/>
            <person name="Galleron N."/>
            <person name="Ghim S.-Y."/>
            <person name="Glaser P."/>
            <person name="Goffeau A."/>
            <person name="Golightly E.J."/>
            <person name="Grandi G."/>
            <person name="Guiseppi G."/>
            <person name="Guy B.J."/>
            <person name="Haga K."/>
            <person name="Haiech J."/>
            <person name="Harwood C.R."/>
            <person name="Henaut A."/>
            <person name="Hilbert H."/>
            <person name="Holsappel S."/>
            <person name="Hosono S."/>
            <person name="Hullo M.-F."/>
            <person name="Itaya M."/>
            <person name="Jones L.-M."/>
            <person name="Joris B."/>
            <person name="Karamata D."/>
            <person name="Kasahara Y."/>
            <person name="Klaerr-Blanchard M."/>
            <person name="Klein C."/>
            <person name="Kobayashi Y."/>
            <person name="Koetter P."/>
            <person name="Koningstein G."/>
            <person name="Krogh S."/>
            <person name="Kumano M."/>
            <person name="Kurita K."/>
            <person name="Lapidus A."/>
            <person name="Lardinois S."/>
            <person name="Lauber J."/>
            <person name="Lazarevic V."/>
            <person name="Lee S.-M."/>
            <person name="Levine A."/>
            <person name="Liu H."/>
            <person name="Masuda S."/>
            <person name="Mauel C."/>
            <person name="Medigue C."/>
            <person name="Medina N."/>
            <person name="Mellado R.P."/>
            <person name="Mizuno M."/>
            <person name="Moestl D."/>
            <person name="Nakai S."/>
            <person name="Noback M."/>
            <person name="Noone D."/>
            <person name="O'Reilly M."/>
            <person name="Ogawa K."/>
            <person name="Ogiwara A."/>
            <person name="Oudega B."/>
            <person name="Park S.-H."/>
            <person name="Parro V."/>
            <person name="Pohl T.M."/>
            <person name="Portetelle D."/>
            <person name="Porwollik S."/>
            <person name="Prescott A.M."/>
            <person name="Presecan E."/>
            <person name="Pujic P."/>
            <person name="Purnelle B."/>
            <person name="Rapoport G."/>
            <person name="Rey M."/>
            <person name="Reynolds S."/>
            <person name="Rieger M."/>
            <person name="Rivolta C."/>
            <person name="Rocha E."/>
            <person name="Roche B."/>
            <person name="Rose M."/>
            <person name="Sadaie Y."/>
            <person name="Sato T."/>
            <person name="Scanlan E."/>
            <person name="Schleich S."/>
            <person name="Schroeter R."/>
            <person name="Scoffone F."/>
            <person name="Sekiguchi J."/>
            <person name="Sekowska A."/>
            <person name="Seror S.J."/>
            <person name="Serror P."/>
            <person name="Shin B.-S."/>
            <person name="Soldo B."/>
            <person name="Sorokin A."/>
            <person name="Tacconi E."/>
            <person name="Takagi T."/>
            <person name="Takahashi H."/>
            <person name="Takemaru K."/>
            <person name="Takeuchi M."/>
            <person name="Tamakoshi A."/>
            <person name="Tanaka T."/>
            <person name="Terpstra P."/>
            <person name="Tognoni A."/>
            <person name="Tosato V."/>
            <person name="Uchiyama S."/>
            <person name="Vandenbol M."/>
            <person name="Vannier F."/>
            <person name="Vassarotti A."/>
            <person name="Viari A."/>
            <person name="Wambutt R."/>
            <person name="Wedler E."/>
            <person name="Wedler H."/>
            <person name="Weitzenegger T."/>
            <person name="Winters P."/>
            <person name="Wipat A."/>
            <person name="Yamamoto H."/>
            <person name="Yamane K."/>
            <person name="Yasumoto K."/>
            <person name="Yata K."/>
            <person name="Yoshida K."/>
            <person name="Yoshikawa H.-F."/>
            <person name="Zumstein E."/>
            <person name="Yoshikawa H."/>
            <person name="Danchin A."/>
        </authorList>
    </citation>
    <scope>NUCLEOTIDE SEQUENCE [LARGE SCALE GENOMIC DNA]</scope>
    <source>
        <strain>168</strain>
    </source>
</reference>